<accession>P86155</accession>
<comment type="function">
    <text evidence="1">Antimicrobial peptide (By similarity). Stimulates insulin secretion by BRIN-BD11 cells in vitro (By similarity). Shows hemolytic activity (By similarity).</text>
</comment>
<comment type="subcellular location">
    <subcellularLocation>
        <location evidence="3 4">Secreted</location>
    </subcellularLocation>
</comment>
<comment type="tissue specificity">
    <text evidence="8">Expressed by the skin glands.</text>
</comment>
<comment type="mass spectrometry">
    <molecule>Esculentin-1a/b</molecule>
    <text>Esculentin-1a/b.</text>
</comment>
<comment type="mass spectrometry">
    <molecule>Esculentin-1a/b(19-46)</molecule>
    <text>Esculentin-1a/b(19-46).</text>
</comment>
<comment type="mass spectrometry">
    <molecule>Esculentin-1a/b(21-46)</molecule>
    <text>Esculentin-1a/b(21-46).</text>
</comment>
<comment type="mass spectrometry">
    <molecule>Esculentin-1a/b</molecule>
    <text>Esculentin-1a/b.</text>
</comment>
<comment type="similarity">
    <text evidence="2">Belongs to the frog skin active peptide (FSAP) family. Esculentin subfamily.</text>
</comment>
<comment type="online information" name="The antimicrobial peptide database">
    <link uri="https://wangapd3.com/database/query_output.php?ID=00082"/>
</comment>
<evidence type="ECO:0000250" key="1">
    <source>
        <dbReference type="UniProtKB" id="P84841"/>
    </source>
</evidence>
<evidence type="ECO:0000255" key="2"/>
<evidence type="ECO:0000269" key="3">
    <source>
    </source>
</evidence>
<evidence type="ECO:0000269" key="4">
    <source>
    </source>
</evidence>
<evidence type="ECO:0000303" key="5">
    <source>
    </source>
</evidence>
<evidence type="ECO:0000303" key="6">
    <source>
    </source>
</evidence>
<evidence type="ECO:0000305" key="7"/>
<evidence type="ECO:0000305" key="8">
    <source>
    </source>
</evidence>
<organism>
    <name type="scientific">Pelophylax ridibundus</name>
    <name type="common">Marsh frog</name>
    <name type="synonym">Rana ridibunda</name>
    <dbReference type="NCBI Taxonomy" id="8406"/>
    <lineage>
        <taxon>Eukaryota</taxon>
        <taxon>Metazoa</taxon>
        <taxon>Chordata</taxon>
        <taxon>Craniata</taxon>
        <taxon>Vertebrata</taxon>
        <taxon>Euteleostomi</taxon>
        <taxon>Amphibia</taxon>
        <taxon>Batrachia</taxon>
        <taxon>Anura</taxon>
        <taxon>Neobatrachia</taxon>
        <taxon>Ranoidea</taxon>
        <taxon>Ranidae</taxon>
        <taxon>Pelophylax</taxon>
    </lineage>
</organism>
<sequence>GIFSKLAGKKLKNLLISGLKNVGKEVGMDVVRTGIDIAGCKIKGEC</sequence>
<dbReference type="SMR" id="P86155"/>
<dbReference type="GO" id="GO:0005576">
    <property type="term" value="C:extracellular region"/>
    <property type="evidence" value="ECO:0007669"/>
    <property type="project" value="UniProtKB-SubCell"/>
</dbReference>
<dbReference type="GO" id="GO:0042742">
    <property type="term" value="P:defense response to bacterium"/>
    <property type="evidence" value="ECO:0007669"/>
    <property type="project" value="UniProtKB-KW"/>
</dbReference>
<dbReference type="GO" id="GO:0031640">
    <property type="term" value="P:killing of cells of another organism"/>
    <property type="evidence" value="ECO:0007669"/>
    <property type="project" value="UniProtKB-KW"/>
</dbReference>
<dbReference type="InterPro" id="IPR012521">
    <property type="entry name" value="Antimicrobial_frog_2"/>
</dbReference>
<dbReference type="Pfam" id="PF08023">
    <property type="entry name" value="Antimicrobial_2"/>
    <property type="match status" value="1"/>
</dbReference>
<keyword id="KW-0878">Amphibian defense peptide</keyword>
<keyword id="KW-0044">Antibiotic</keyword>
<keyword id="KW-0929">Antimicrobial</keyword>
<keyword id="KW-0204">Cytolysis</keyword>
<keyword id="KW-0903">Direct protein sequencing</keyword>
<keyword id="KW-1015">Disulfide bond</keyword>
<keyword id="KW-0354">Hemolysis</keyword>
<keyword id="KW-0964">Secreted</keyword>
<name>ES1AB_PELRI</name>
<proteinExistence type="evidence at protein level"/>
<feature type="peptide" id="PRO_0000361070" description="Esculentin-1a/b" evidence="3 4">
    <location>
        <begin position="1"/>
        <end position="46"/>
    </location>
</feature>
<feature type="peptide" id="PRO_0000361071" description="Esculentin-1a/b(19-46)" evidence="3">
    <location>
        <begin position="19"/>
        <end position="46"/>
    </location>
</feature>
<feature type="peptide" id="PRO_0000361072" description="Esculentin-1a/b(21-46)" evidence="3">
    <location>
        <begin position="21"/>
        <end position="46"/>
    </location>
</feature>
<feature type="disulfide bond" evidence="3 4">
    <location>
        <begin position="40"/>
        <end position="46"/>
    </location>
</feature>
<feature type="unsure residue" description="L or I" evidence="3">
    <location>
        <position position="11"/>
    </location>
</feature>
<reference evidence="7" key="1">
    <citation type="journal article" date="2008" name="Rapid Commun. Mass Spectrom.">
        <title>De novo sequencing of peptides secreted by the skin glands of the caucasian green frog Rana ridibunda.</title>
        <authorList>
            <person name="Samgina T.Y."/>
            <person name="Artemenko K.A."/>
            <person name="Gorshkov V.A."/>
            <person name="Ogourtsov S.V."/>
            <person name="Zubarev R.A."/>
            <person name="Lebedev A.T."/>
        </authorList>
    </citation>
    <scope>PROTEIN SEQUENCE</scope>
    <scope>SUBCELLULAR LOCATION</scope>
    <scope>MASS SPECTROMETRY</scope>
    <scope>DISULFIDE BOND</scope>
    <source>
        <tissue evidence="5">Skin secretion</tissue>
    </source>
</reference>
<reference key="2">
    <citation type="journal article" date="2017" name="Anal. Bioanal. Chem.">
        <title>Differentiation of frogs from two populations belonging to the Pelophylax esculentus complex by LC-MS/MS comparison of their skin peptidomes.</title>
        <authorList>
            <person name="Samgina T.Y."/>
            <person name="Artemenko K.A."/>
            <person name="Bergquist J."/>
            <person name="Trebse P."/>
            <person name="Torkar G."/>
            <person name="Tolpina M.D."/>
            <person name="Lebedev A.T."/>
        </authorList>
    </citation>
    <scope>PROTEIN SEQUENCE</scope>
    <scope>SUBCELLULAR LOCATION</scope>
    <scope>DISULFIDE BOND</scope>
    <scope>MASS SPECTROMETRY</scope>
    <scope>IDENTIFICATION BY MASS SPECTROMETRY</scope>
    <source>
        <tissue evidence="6">Skin secretion</tissue>
    </source>
</reference>
<protein>
    <recommendedName>
        <fullName evidence="5">Esculentin-1a/b</fullName>
    </recommendedName>
    <component>
        <recommendedName>
            <fullName evidence="5">Esculentin-1a/b(19-46)</fullName>
        </recommendedName>
    </component>
    <component>
        <recommendedName>
            <fullName evidence="5">Esculentin-1a/b(21-46)</fullName>
        </recommendedName>
    </component>
</protein>